<feature type="chain" id="PRO_1000086671" description="Large ribosomal subunit protein uL18">
    <location>
        <begin position="1"/>
        <end position="116"/>
    </location>
</feature>
<accession>A6W376</accession>
<sequence length="116" mass="12584">MNTKKQSRIRRARRARLHIRDLGANRLTVHRTPRHMYAQVISPCGSKVLASASTLEEALRGSATGNKVAAKEVGTLIATRAKAAGVTSVAFDRSGFKYHGRVQVLADAAREAGLEF</sequence>
<organism>
    <name type="scientific">Marinomonas sp. (strain MWYL1)</name>
    <dbReference type="NCBI Taxonomy" id="400668"/>
    <lineage>
        <taxon>Bacteria</taxon>
        <taxon>Pseudomonadati</taxon>
        <taxon>Pseudomonadota</taxon>
        <taxon>Gammaproteobacteria</taxon>
        <taxon>Oceanospirillales</taxon>
        <taxon>Oceanospirillaceae</taxon>
        <taxon>Marinomonas</taxon>
    </lineage>
</organism>
<evidence type="ECO:0000255" key="1">
    <source>
        <dbReference type="HAMAP-Rule" id="MF_01337"/>
    </source>
</evidence>
<evidence type="ECO:0000305" key="2"/>
<comment type="function">
    <text evidence="1">This is one of the proteins that bind and probably mediate the attachment of the 5S RNA into the large ribosomal subunit, where it forms part of the central protuberance.</text>
</comment>
<comment type="subunit">
    <text evidence="1">Part of the 50S ribosomal subunit; part of the 5S rRNA/L5/L18/L25 subcomplex. Contacts the 5S and 23S rRNAs.</text>
</comment>
<comment type="similarity">
    <text evidence="1">Belongs to the universal ribosomal protein uL18 family.</text>
</comment>
<protein>
    <recommendedName>
        <fullName evidence="1">Large ribosomal subunit protein uL18</fullName>
    </recommendedName>
    <alternativeName>
        <fullName evidence="2">50S ribosomal protein L18</fullName>
    </alternativeName>
</protein>
<name>RL18_MARMS</name>
<dbReference type="EMBL" id="CP000749">
    <property type="protein sequence ID" value="ABR73155.1"/>
    <property type="molecule type" value="Genomic_DNA"/>
</dbReference>
<dbReference type="SMR" id="A6W376"/>
<dbReference type="STRING" id="400668.Mmwyl1_4260"/>
<dbReference type="KEGG" id="mmw:Mmwyl1_4260"/>
<dbReference type="eggNOG" id="COG0256">
    <property type="taxonomic scope" value="Bacteria"/>
</dbReference>
<dbReference type="HOGENOM" id="CLU_098841_0_1_6"/>
<dbReference type="OrthoDB" id="9810939at2"/>
<dbReference type="GO" id="GO:0022625">
    <property type="term" value="C:cytosolic large ribosomal subunit"/>
    <property type="evidence" value="ECO:0007669"/>
    <property type="project" value="TreeGrafter"/>
</dbReference>
<dbReference type="GO" id="GO:0008097">
    <property type="term" value="F:5S rRNA binding"/>
    <property type="evidence" value="ECO:0007669"/>
    <property type="project" value="TreeGrafter"/>
</dbReference>
<dbReference type="GO" id="GO:0003735">
    <property type="term" value="F:structural constituent of ribosome"/>
    <property type="evidence" value="ECO:0007669"/>
    <property type="project" value="InterPro"/>
</dbReference>
<dbReference type="GO" id="GO:0006412">
    <property type="term" value="P:translation"/>
    <property type="evidence" value="ECO:0007669"/>
    <property type="project" value="UniProtKB-UniRule"/>
</dbReference>
<dbReference type="CDD" id="cd00432">
    <property type="entry name" value="Ribosomal_L18_L5e"/>
    <property type="match status" value="1"/>
</dbReference>
<dbReference type="FunFam" id="3.30.420.100:FF:000001">
    <property type="entry name" value="50S ribosomal protein L18"/>
    <property type="match status" value="1"/>
</dbReference>
<dbReference type="Gene3D" id="3.30.420.100">
    <property type="match status" value="1"/>
</dbReference>
<dbReference type="HAMAP" id="MF_01337_B">
    <property type="entry name" value="Ribosomal_uL18_B"/>
    <property type="match status" value="1"/>
</dbReference>
<dbReference type="InterPro" id="IPR004389">
    <property type="entry name" value="Ribosomal_uL18_bac-type"/>
</dbReference>
<dbReference type="InterPro" id="IPR005484">
    <property type="entry name" value="Ribosomal_uL18_bac/euk"/>
</dbReference>
<dbReference type="NCBIfam" id="TIGR00060">
    <property type="entry name" value="L18_bact"/>
    <property type="match status" value="1"/>
</dbReference>
<dbReference type="PANTHER" id="PTHR12899">
    <property type="entry name" value="39S RIBOSOMAL PROTEIN L18, MITOCHONDRIAL"/>
    <property type="match status" value="1"/>
</dbReference>
<dbReference type="PANTHER" id="PTHR12899:SF3">
    <property type="entry name" value="LARGE RIBOSOMAL SUBUNIT PROTEIN UL18M"/>
    <property type="match status" value="1"/>
</dbReference>
<dbReference type="Pfam" id="PF00861">
    <property type="entry name" value="Ribosomal_L18p"/>
    <property type="match status" value="1"/>
</dbReference>
<dbReference type="SUPFAM" id="SSF53137">
    <property type="entry name" value="Translational machinery components"/>
    <property type="match status" value="1"/>
</dbReference>
<keyword id="KW-0687">Ribonucleoprotein</keyword>
<keyword id="KW-0689">Ribosomal protein</keyword>
<keyword id="KW-0694">RNA-binding</keyword>
<keyword id="KW-0699">rRNA-binding</keyword>
<reference key="1">
    <citation type="submission" date="2007-06" db="EMBL/GenBank/DDBJ databases">
        <title>Complete sequence of Marinomonas sp. MWYL1.</title>
        <authorList>
            <consortium name="US DOE Joint Genome Institute"/>
            <person name="Copeland A."/>
            <person name="Lucas S."/>
            <person name="Lapidus A."/>
            <person name="Barry K."/>
            <person name="Glavina del Rio T."/>
            <person name="Dalin E."/>
            <person name="Tice H."/>
            <person name="Pitluck S."/>
            <person name="Kiss H."/>
            <person name="Brettin T."/>
            <person name="Bruce D."/>
            <person name="Detter J.C."/>
            <person name="Han C."/>
            <person name="Schmutz J."/>
            <person name="Larimer F."/>
            <person name="Land M."/>
            <person name="Hauser L."/>
            <person name="Kyrpides N."/>
            <person name="Kim E."/>
            <person name="Johnston A.W.B."/>
            <person name="Todd J.D."/>
            <person name="Rogers R."/>
            <person name="Wexler M."/>
            <person name="Bond P.L."/>
            <person name="Li Y."/>
            <person name="Richardson P."/>
        </authorList>
    </citation>
    <scope>NUCLEOTIDE SEQUENCE [LARGE SCALE GENOMIC DNA]</scope>
    <source>
        <strain>MWYL1</strain>
    </source>
</reference>
<gene>
    <name evidence="1" type="primary">rplR</name>
    <name type="ordered locus">Mmwyl1_4260</name>
</gene>
<proteinExistence type="inferred from homology"/>